<keyword id="KW-0002">3D-structure</keyword>
<keyword id="KW-0131">Cell cycle</keyword>
<keyword id="KW-0132">Cell division</keyword>
<keyword id="KW-0966">Cell projection</keyword>
<keyword id="KW-0159">Chromosome partition</keyword>
<keyword id="KW-0963">Cytoplasm</keyword>
<keyword id="KW-0206">Cytoskeleton</keyword>
<keyword id="KW-0967">Endosome</keyword>
<keyword id="KW-0342">GTP-binding</keyword>
<keyword id="KW-0458">Lysosome</keyword>
<keyword id="KW-0472">Membrane</keyword>
<keyword id="KW-0498">Mitosis</keyword>
<keyword id="KW-0547">Nucleotide-binding</keyword>
<keyword id="KW-0653">Protein transport</keyword>
<keyword id="KW-1267">Proteomics identification</keyword>
<keyword id="KW-1185">Reference proteome</keyword>
<keyword id="KW-0770">Synapse</keyword>
<keyword id="KW-0813">Transport</keyword>
<accession>Q96BM9</accession>
<accession>B3KXD0</accession>
<proteinExistence type="evidence at protein level"/>
<protein>
    <recommendedName>
        <fullName>ADP-ribosylation factor-like protein 8A</fullName>
    </recommendedName>
    <alternativeName>
        <fullName>ADP-ribosylation factor-like protein 10B</fullName>
    </alternativeName>
    <alternativeName>
        <fullName>Novel small G protein indispensable for equal chromosome segregation 2</fullName>
    </alternativeName>
</protein>
<name>ARL8A_HUMAN</name>
<sequence length="186" mass="21416">MIALFNKLLDWFKALFWKEEMELTLVGLQYSGKTTFVNVIASGQFNEDMIPTVGFNMRKITKGNVTIKLWDIGGQPRFRSMWERYCRGVSAIVYMVDAADQEKIEASKNELHNLLDKPQLQGIPVLVLGNKRDLPGALDEKELIEKMNLSAIQDREICCYSISCKEKDNIDITLQWLIQHSKSRRS</sequence>
<gene>
    <name type="primary">ARL8A</name>
    <name type="synonym">ARL10B</name>
    <name type="synonym">GIE2</name>
</gene>
<reference key="1">
    <citation type="journal article" date="2004" name="J. Cell Sci.">
        <title>Novel small GTPase subfamily capable of associating with tubulin is required for chromosome segregation.</title>
        <authorList>
            <person name="Okai T."/>
            <person name="Araki Y."/>
            <person name="Tada M."/>
            <person name="Tateno T."/>
            <person name="Kontani K."/>
            <person name="Katada T."/>
        </authorList>
    </citation>
    <scope>NUCLEOTIDE SEQUENCE [MRNA]</scope>
    <scope>TISSUE SPECIFICITY</scope>
    <source>
        <tissue>Brain</tissue>
    </source>
</reference>
<reference key="2">
    <citation type="journal article" date="2004" name="Nat. Genet.">
        <title>Complete sequencing and characterization of 21,243 full-length human cDNAs.</title>
        <authorList>
            <person name="Ota T."/>
            <person name="Suzuki Y."/>
            <person name="Nishikawa T."/>
            <person name="Otsuki T."/>
            <person name="Sugiyama T."/>
            <person name="Irie R."/>
            <person name="Wakamatsu A."/>
            <person name="Hayashi K."/>
            <person name="Sato H."/>
            <person name="Nagai K."/>
            <person name="Kimura K."/>
            <person name="Makita H."/>
            <person name="Sekine M."/>
            <person name="Obayashi M."/>
            <person name="Nishi T."/>
            <person name="Shibahara T."/>
            <person name="Tanaka T."/>
            <person name="Ishii S."/>
            <person name="Yamamoto J."/>
            <person name="Saito K."/>
            <person name="Kawai Y."/>
            <person name="Isono Y."/>
            <person name="Nakamura Y."/>
            <person name="Nagahari K."/>
            <person name="Murakami K."/>
            <person name="Yasuda T."/>
            <person name="Iwayanagi T."/>
            <person name="Wagatsuma M."/>
            <person name="Shiratori A."/>
            <person name="Sudo H."/>
            <person name="Hosoiri T."/>
            <person name="Kaku Y."/>
            <person name="Kodaira H."/>
            <person name="Kondo H."/>
            <person name="Sugawara M."/>
            <person name="Takahashi M."/>
            <person name="Kanda K."/>
            <person name="Yokoi T."/>
            <person name="Furuya T."/>
            <person name="Kikkawa E."/>
            <person name="Omura Y."/>
            <person name="Abe K."/>
            <person name="Kamihara K."/>
            <person name="Katsuta N."/>
            <person name="Sato K."/>
            <person name="Tanikawa M."/>
            <person name="Yamazaki M."/>
            <person name="Ninomiya K."/>
            <person name="Ishibashi T."/>
            <person name="Yamashita H."/>
            <person name="Murakawa K."/>
            <person name="Fujimori K."/>
            <person name="Tanai H."/>
            <person name="Kimata M."/>
            <person name="Watanabe M."/>
            <person name="Hiraoka S."/>
            <person name="Chiba Y."/>
            <person name="Ishida S."/>
            <person name="Ono Y."/>
            <person name="Takiguchi S."/>
            <person name="Watanabe S."/>
            <person name="Yosida M."/>
            <person name="Hotuta T."/>
            <person name="Kusano J."/>
            <person name="Kanehori K."/>
            <person name="Takahashi-Fujii A."/>
            <person name="Hara H."/>
            <person name="Tanase T.-O."/>
            <person name="Nomura Y."/>
            <person name="Togiya S."/>
            <person name="Komai F."/>
            <person name="Hara R."/>
            <person name="Takeuchi K."/>
            <person name="Arita M."/>
            <person name="Imose N."/>
            <person name="Musashino K."/>
            <person name="Yuuki H."/>
            <person name="Oshima A."/>
            <person name="Sasaki N."/>
            <person name="Aotsuka S."/>
            <person name="Yoshikawa Y."/>
            <person name="Matsunawa H."/>
            <person name="Ichihara T."/>
            <person name="Shiohata N."/>
            <person name="Sano S."/>
            <person name="Moriya S."/>
            <person name="Momiyama H."/>
            <person name="Satoh N."/>
            <person name="Takami S."/>
            <person name="Terashima Y."/>
            <person name="Suzuki O."/>
            <person name="Nakagawa S."/>
            <person name="Senoh A."/>
            <person name="Mizoguchi H."/>
            <person name="Goto Y."/>
            <person name="Shimizu F."/>
            <person name="Wakebe H."/>
            <person name="Hishigaki H."/>
            <person name="Watanabe T."/>
            <person name="Sugiyama A."/>
            <person name="Takemoto M."/>
            <person name="Kawakami B."/>
            <person name="Yamazaki M."/>
            <person name="Watanabe K."/>
            <person name="Kumagai A."/>
            <person name="Itakura S."/>
            <person name="Fukuzumi Y."/>
            <person name="Fujimori Y."/>
            <person name="Komiyama M."/>
            <person name="Tashiro H."/>
            <person name="Tanigami A."/>
            <person name="Fujiwara T."/>
            <person name="Ono T."/>
            <person name="Yamada K."/>
            <person name="Fujii Y."/>
            <person name="Ozaki K."/>
            <person name="Hirao M."/>
            <person name="Ohmori Y."/>
            <person name="Kawabata A."/>
            <person name="Hikiji T."/>
            <person name="Kobatake N."/>
            <person name="Inagaki H."/>
            <person name="Ikema Y."/>
            <person name="Okamoto S."/>
            <person name="Okitani R."/>
            <person name="Kawakami T."/>
            <person name="Noguchi S."/>
            <person name="Itoh T."/>
            <person name="Shigeta K."/>
            <person name="Senba T."/>
            <person name="Matsumura K."/>
            <person name="Nakajima Y."/>
            <person name="Mizuno T."/>
            <person name="Morinaga M."/>
            <person name="Sasaki M."/>
            <person name="Togashi T."/>
            <person name="Oyama M."/>
            <person name="Hata H."/>
            <person name="Watanabe M."/>
            <person name="Komatsu T."/>
            <person name="Mizushima-Sugano J."/>
            <person name="Satoh T."/>
            <person name="Shirai Y."/>
            <person name="Takahashi Y."/>
            <person name="Nakagawa K."/>
            <person name="Okumura K."/>
            <person name="Nagase T."/>
            <person name="Nomura N."/>
            <person name="Kikuchi H."/>
            <person name="Masuho Y."/>
            <person name="Yamashita R."/>
            <person name="Nakai K."/>
            <person name="Yada T."/>
            <person name="Nakamura Y."/>
            <person name="Ohara O."/>
            <person name="Isogai T."/>
            <person name="Sugano S."/>
        </authorList>
    </citation>
    <scope>NUCLEOTIDE SEQUENCE [LARGE SCALE MRNA]</scope>
    <source>
        <tissue>Caudate nucleus</tissue>
    </source>
</reference>
<reference key="3">
    <citation type="journal article" date="2006" name="Nature">
        <title>The DNA sequence and biological annotation of human chromosome 1.</title>
        <authorList>
            <person name="Gregory S.G."/>
            <person name="Barlow K.F."/>
            <person name="McLay K.E."/>
            <person name="Kaul R."/>
            <person name="Swarbreck D."/>
            <person name="Dunham A."/>
            <person name="Scott C.E."/>
            <person name="Howe K.L."/>
            <person name="Woodfine K."/>
            <person name="Spencer C.C.A."/>
            <person name="Jones M.C."/>
            <person name="Gillson C."/>
            <person name="Searle S."/>
            <person name="Zhou Y."/>
            <person name="Kokocinski F."/>
            <person name="McDonald L."/>
            <person name="Evans R."/>
            <person name="Phillips K."/>
            <person name="Atkinson A."/>
            <person name="Cooper R."/>
            <person name="Jones C."/>
            <person name="Hall R.E."/>
            <person name="Andrews T.D."/>
            <person name="Lloyd C."/>
            <person name="Ainscough R."/>
            <person name="Almeida J.P."/>
            <person name="Ambrose K.D."/>
            <person name="Anderson F."/>
            <person name="Andrew R.W."/>
            <person name="Ashwell R.I.S."/>
            <person name="Aubin K."/>
            <person name="Babbage A.K."/>
            <person name="Bagguley C.L."/>
            <person name="Bailey J."/>
            <person name="Beasley H."/>
            <person name="Bethel G."/>
            <person name="Bird C.P."/>
            <person name="Bray-Allen S."/>
            <person name="Brown J.Y."/>
            <person name="Brown A.J."/>
            <person name="Buckley D."/>
            <person name="Burton J."/>
            <person name="Bye J."/>
            <person name="Carder C."/>
            <person name="Chapman J.C."/>
            <person name="Clark S.Y."/>
            <person name="Clarke G."/>
            <person name="Clee C."/>
            <person name="Cobley V."/>
            <person name="Collier R.E."/>
            <person name="Corby N."/>
            <person name="Coville G.J."/>
            <person name="Davies J."/>
            <person name="Deadman R."/>
            <person name="Dunn M."/>
            <person name="Earthrowl M."/>
            <person name="Ellington A.G."/>
            <person name="Errington H."/>
            <person name="Frankish A."/>
            <person name="Frankland J."/>
            <person name="French L."/>
            <person name="Garner P."/>
            <person name="Garnett J."/>
            <person name="Gay L."/>
            <person name="Ghori M.R.J."/>
            <person name="Gibson R."/>
            <person name="Gilby L.M."/>
            <person name="Gillett W."/>
            <person name="Glithero R.J."/>
            <person name="Grafham D.V."/>
            <person name="Griffiths C."/>
            <person name="Griffiths-Jones S."/>
            <person name="Grocock R."/>
            <person name="Hammond S."/>
            <person name="Harrison E.S.I."/>
            <person name="Hart E."/>
            <person name="Haugen E."/>
            <person name="Heath P.D."/>
            <person name="Holmes S."/>
            <person name="Holt K."/>
            <person name="Howden P.J."/>
            <person name="Hunt A.R."/>
            <person name="Hunt S.E."/>
            <person name="Hunter G."/>
            <person name="Isherwood J."/>
            <person name="James R."/>
            <person name="Johnson C."/>
            <person name="Johnson D."/>
            <person name="Joy A."/>
            <person name="Kay M."/>
            <person name="Kershaw J.K."/>
            <person name="Kibukawa M."/>
            <person name="Kimberley A.M."/>
            <person name="King A."/>
            <person name="Knights A.J."/>
            <person name="Lad H."/>
            <person name="Laird G."/>
            <person name="Lawlor S."/>
            <person name="Leongamornlert D.A."/>
            <person name="Lloyd D.M."/>
            <person name="Loveland J."/>
            <person name="Lovell J."/>
            <person name="Lush M.J."/>
            <person name="Lyne R."/>
            <person name="Martin S."/>
            <person name="Mashreghi-Mohammadi M."/>
            <person name="Matthews L."/>
            <person name="Matthews N.S.W."/>
            <person name="McLaren S."/>
            <person name="Milne S."/>
            <person name="Mistry S."/>
            <person name="Moore M.J.F."/>
            <person name="Nickerson T."/>
            <person name="O'Dell C.N."/>
            <person name="Oliver K."/>
            <person name="Palmeiri A."/>
            <person name="Palmer S.A."/>
            <person name="Parker A."/>
            <person name="Patel D."/>
            <person name="Pearce A.V."/>
            <person name="Peck A.I."/>
            <person name="Pelan S."/>
            <person name="Phelps K."/>
            <person name="Phillimore B.J."/>
            <person name="Plumb R."/>
            <person name="Rajan J."/>
            <person name="Raymond C."/>
            <person name="Rouse G."/>
            <person name="Saenphimmachak C."/>
            <person name="Sehra H.K."/>
            <person name="Sheridan E."/>
            <person name="Shownkeen R."/>
            <person name="Sims S."/>
            <person name="Skuce C.D."/>
            <person name="Smith M."/>
            <person name="Steward C."/>
            <person name="Subramanian S."/>
            <person name="Sycamore N."/>
            <person name="Tracey A."/>
            <person name="Tromans A."/>
            <person name="Van Helmond Z."/>
            <person name="Wall M."/>
            <person name="Wallis J.M."/>
            <person name="White S."/>
            <person name="Whitehead S.L."/>
            <person name="Wilkinson J.E."/>
            <person name="Willey D.L."/>
            <person name="Williams H."/>
            <person name="Wilming L."/>
            <person name="Wray P.W."/>
            <person name="Wu Z."/>
            <person name="Coulson A."/>
            <person name="Vaudin M."/>
            <person name="Sulston J.E."/>
            <person name="Durbin R.M."/>
            <person name="Hubbard T."/>
            <person name="Wooster R."/>
            <person name="Dunham I."/>
            <person name="Carter N.P."/>
            <person name="McVean G."/>
            <person name="Ross M.T."/>
            <person name="Harrow J."/>
            <person name="Olson M.V."/>
            <person name="Beck S."/>
            <person name="Rogers J."/>
            <person name="Bentley D.R."/>
        </authorList>
    </citation>
    <scope>NUCLEOTIDE SEQUENCE [LARGE SCALE GENOMIC DNA]</scope>
</reference>
<reference key="4">
    <citation type="submission" date="2005-07" db="EMBL/GenBank/DDBJ databases">
        <authorList>
            <person name="Mural R.J."/>
            <person name="Istrail S."/>
            <person name="Sutton G.G."/>
            <person name="Florea L."/>
            <person name="Halpern A.L."/>
            <person name="Mobarry C.M."/>
            <person name="Lippert R."/>
            <person name="Walenz B."/>
            <person name="Shatkay H."/>
            <person name="Dew I."/>
            <person name="Miller J.R."/>
            <person name="Flanigan M.J."/>
            <person name="Edwards N.J."/>
            <person name="Bolanos R."/>
            <person name="Fasulo D."/>
            <person name="Halldorsson B.V."/>
            <person name="Hannenhalli S."/>
            <person name="Turner R."/>
            <person name="Yooseph S."/>
            <person name="Lu F."/>
            <person name="Nusskern D.R."/>
            <person name="Shue B.C."/>
            <person name="Zheng X.H."/>
            <person name="Zhong F."/>
            <person name="Delcher A.L."/>
            <person name="Huson D.H."/>
            <person name="Kravitz S.A."/>
            <person name="Mouchard L."/>
            <person name="Reinert K."/>
            <person name="Remington K.A."/>
            <person name="Clark A.G."/>
            <person name="Waterman M.S."/>
            <person name="Eichler E.E."/>
            <person name="Adams M.D."/>
            <person name="Hunkapiller M.W."/>
            <person name="Myers E.W."/>
            <person name="Venter J.C."/>
        </authorList>
    </citation>
    <scope>NUCLEOTIDE SEQUENCE [LARGE SCALE GENOMIC DNA]</scope>
</reference>
<reference key="5">
    <citation type="journal article" date="2004" name="Genome Res.">
        <title>The status, quality, and expansion of the NIH full-length cDNA project: the Mammalian Gene Collection (MGC).</title>
        <authorList>
            <consortium name="The MGC Project Team"/>
        </authorList>
    </citation>
    <scope>NUCLEOTIDE SEQUENCE [LARGE SCALE MRNA]</scope>
    <source>
        <tissue>Mammary gland</tissue>
    </source>
</reference>
<reference key="6">
    <citation type="journal article" date="2006" name="J. Cell Sci.">
        <title>An N-terminally acetylated Arf-like GTPase is localised to lysosomes and affects their motility.</title>
        <authorList>
            <person name="Hofmann I."/>
            <person name="Munro S."/>
        </authorList>
    </citation>
    <scope>SUBCELLULAR LOCATION</scope>
</reference>
<reference key="7">
    <citation type="journal article" date="2007" name="Traffic">
        <title>Integral and associated lysosomal membrane proteins.</title>
        <authorList>
            <person name="Schroeder B."/>
            <person name="Wrocklage C."/>
            <person name="Pan C."/>
            <person name="Jaeger R."/>
            <person name="Koesters B."/>
            <person name="Schaefer H."/>
            <person name="Elsaesser H.-P."/>
            <person name="Mann M."/>
            <person name="Hasilik A."/>
        </authorList>
    </citation>
    <scope>SUBCELLULAR LOCATION [LARGE SCALE ANALYSIS]</scope>
    <source>
        <tissue>Placenta</tissue>
    </source>
</reference>
<reference key="8">
    <citation type="journal article" date="2011" name="BMC Syst. Biol.">
        <title>Initial characterization of the human central proteome.</title>
        <authorList>
            <person name="Burkard T.R."/>
            <person name="Planyavsky M."/>
            <person name="Kaupe I."/>
            <person name="Breitwieser F.P."/>
            <person name="Buerckstuemmer T."/>
            <person name="Bennett K.L."/>
            <person name="Superti-Furga G."/>
            <person name="Colinge J."/>
        </authorList>
    </citation>
    <scope>IDENTIFICATION BY MASS SPECTROMETRY [LARGE SCALE ANALYSIS]</scope>
</reference>
<reference key="9">
    <citation type="journal article" date="2014" name="J. Proteomics">
        <title>An enzyme assisted RP-RPLC approach for in-depth analysis of human liver phosphoproteome.</title>
        <authorList>
            <person name="Bian Y."/>
            <person name="Song C."/>
            <person name="Cheng K."/>
            <person name="Dong M."/>
            <person name="Wang F."/>
            <person name="Huang J."/>
            <person name="Sun D."/>
            <person name="Wang L."/>
            <person name="Ye M."/>
            <person name="Zou H."/>
        </authorList>
    </citation>
    <scope>IDENTIFICATION BY MASS SPECTROMETRY [LARGE SCALE ANALYSIS]</scope>
    <source>
        <tissue>Liver</tissue>
    </source>
</reference>
<reference key="10">
    <citation type="journal article" date="2015" name="Proteomics">
        <title>N-terminome analysis of the human mitochondrial proteome.</title>
        <authorList>
            <person name="Vaca Jacome A.S."/>
            <person name="Rabilloud T."/>
            <person name="Schaeffer-Reiss C."/>
            <person name="Rompais M."/>
            <person name="Ayoub D."/>
            <person name="Lane L."/>
            <person name="Bairoch A."/>
            <person name="Van Dorsselaer A."/>
            <person name="Carapito C."/>
        </authorList>
    </citation>
    <scope>IDENTIFICATION BY MASS SPECTROMETRY [LARGE SCALE ANALYSIS]</scope>
</reference>
<reference key="11">
    <citation type="journal article" date="2017" name="J. Cell Biol.">
        <title>The Rab7 effector PLEKHM1 binds Arl8b to promote cargo traffic to lysosomes.</title>
        <authorList>
            <person name="Marwaha R."/>
            <person name="Arya S.B."/>
            <person name="Jagga D."/>
            <person name="Kaur H."/>
            <person name="Tuli A."/>
            <person name="Sharma M."/>
        </authorList>
    </citation>
    <scope>INTERACTION WITH PLEKHM1</scope>
</reference>
<reference key="12">
    <citation type="submission" date="2005-05" db="PDB data bank">
        <title>Structure of human ADP-ribosylation factor-like 10B.</title>
        <authorList>
            <consortium name="Structural genomics consortium (SGC)"/>
        </authorList>
    </citation>
    <scope>X-RAY CRYSTALLOGRAPHY (1.7 ANGSTROMS) OF 18-186 IN COMPLEX WITH GTP ANALOG</scope>
</reference>
<reference key="13">
    <citation type="journal article" date="2022" name="Nat. Commun.">
        <title>RUFY3 and RUFY4 are ARL8 effectors that promote coupling of endolysosomes to dynein-dynactin.</title>
        <authorList>
            <person name="Keren-Kaplan T."/>
            <person name="Saric A."/>
            <person name="Ghosh S."/>
            <person name="Williamson C.D."/>
            <person name="Jia R."/>
            <person name="Li Y."/>
            <person name="Bonifacino J.S."/>
        </authorList>
    </citation>
    <scope>INTERACTION WITH RUFY3 AND RUFY4</scope>
</reference>
<organism>
    <name type="scientific">Homo sapiens</name>
    <name type="common">Human</name>
    <dbReference type="NCBI Taxonomy" id="9606"/>
    <lineage>
        <taxon>Eukaryota</taxon>
        <taxon>Metazoa</taxon>
        <taxon>Chordata</taxon>
        <taxon>Craniata</taxon>
        <taxon>Vertebrata</taxon>
        <taxon>Euteleostomi</taxon>
        <taxon>Mammalia</taxon>
        <taxon>Eutheria</taxon>
        <taxon>Euarchontoglires</taxon>
        <taxon>Primates</taxon>
        <taxon>Haplorrhini</taxon>
        <taxon>Catarrhini</taxon>
        <taxon>Hominidae</taxon>
        <taxon>Homo</taxon>
    </lineage>
</organism>
<dbReference type="EMBL" id="AB118752">
    <property type="protein sequence ID" value="BAD23993.1"/>
    <property type="molecule type" value="mRNA"/>
</dbReference>
<dbReference type="EMBL" id="AK127138">
    <property type="protein sequence ID" value="BAG54442.1"/>
    <property type="molecule type" value="mRNA"/>
</dbReference>
<dbReference type="EMBL" id="AL592300">
    <property type="status" value="NOT_ANNOTATED_CDS"/>
    <property type="molecule type" value="Genomic_DNA"/>
</dbReference>
<dbReference type="EMBL" id="CH471067">
    <property type="protein sequence ID" value="EAW91395.1"/>
    <property type="molecule type" value="Genomic_DNA"/>
</dbReference>
<dbReference type="EMBL" id="BC015408">
    <property type="protein sequence ID" value="AAH15408.1"/>
    <property type="molecule type" value="mRNA"/>
</dbReference>
<dbReference type="CCDS" id="CCDS1421.1"/>
<dbReference type="RefSeq" id="NP_001243058.1">
    <property type="nucleotide sequence ID" value="NM_001256129.1"/>
</dbReference>
<dbReference type="RefSeq" id="NP_620150.1">
    <property type="nucleotide sequence ID" value="NM_138795.4"/>
</dbReference>
<dbReference type="PDB" id="1ZD9">
    <property type="method" value="X-ray"/>
    <property type="resolution" value="1.70 A"/>
    <property type="chains" value="A=18-186"/>
</dbReference>
<dbReference type="PDB" id="2H18">
    <property type="method" value="X-ray"/>
    <property type="resolution" value="1.90 A"/>
    <property type="chains" value="A=9-182"/>
</dbReference>
<dbReference type="PDB" id="4ILE">
    <property type="method" value="X-ray"/>
    <property type="resolution" value="2.68 A"/>
    <property type="chains" value="A=1-181"/>
</dbReference>
<dbReference type="PDBsum" id="1ZD9"/>
<dbReference type="PDBsum" id="2H18"/>
<dbReference type="PDBsum" id="4ILE"/>
<dbReference type="SMR" id="Q96BM9"/>
<dbReference type="BioGRID" id="126084">
    <property type="interactions" value="104"/>
</dbReference>
<dbReference type="FunCoup" id="Q96BM9">
    <property type="interactions" value="1262"/>
</dbReference>
<dbReference type="IntAct" id="Q96BM9">
    <property type="interactions" value="64"/>
</dbReference>
<dbReference type="MINT" id="Q96BM9"/>
<dbReference type="STRING" id="9606.ENSP00000272217"/>
<dbReference type="GlyCosmos" id="Q96BM9">
    <property type="glycosylation" value="1 site, 1 glycan"/>
</dbReference>
<dbReference type="GlyGen" id="Q96BM9">
    <property type="glycosylation" value="1 site, 1 O-linked glycan (1 site)"/>
</dbReference>
<dbReference type="iPTMnet" id="Q96BM9"/>
<dbReference type="PhosphoSitePlus" id="Q96BM9"/>
<dbReference type="BioMuta" id="ARL8A"/>
<dbReference type="DMDM" id="74751775"/>
<dbReference type="jPOST" id="Q96BM9"/>
<dbReference type="MassIVE" id="Q96BM9"/>
<dbReference type="PaxDb" id="9606-ENSP00000272217"/>
<dbReference type="PeptideAtlas" id="Q96BM9"/>
<dbReference type="ProteomicsDB" id="76090"/>
<dbReference type="Pumba" id="Q96BM9"/>
<dbReference type="Antibodypedia" id="34522">
    <property type="antibodies" value="223 antibodies from 23 providers"/>
</dbReference>
<dbReference type="DNASU" id="127829"/>
<dbReference type="Ensembl" id="ENST00000272217.7">
    <property type="protein sequence ID" value="ENSP00000272217.2"/>
    <property type="gene ID" value="ENSG00000143862.8"/>
</dbReference>
<dbReference type="GeneID" id="127829"/>
<dbReference type="KEGG" id="hsa:127829"/>
<dbReference type="MANE-Select" id="ENST00000272217.7">
    <property type="protein sequence ID" value="ENSP00000272217.2"/>
    <property type="RefSeq nucleotide sequence ID" value="NM_138795.4"/>
    <property type="RefSeq protein sequence ID" value="NP_620150.1"/>
</dbReference>
<dbReference type="UCSC" id="uc001gxk.3">
    <property type="organism name" value="human"/>
</dbReference>
<dbReference type="AGR" id="HGNC:25192"/>
<dbReference type="CTD" id="127829"/>
<dbReference type="DisGeNET" id="127829"/>
<dbReference type="GeneCards" id="ARL8A"/>
<dbReference type="HGNC" id="HGNC:25192">
    <property type="gene designation" value="ARL8A"/>
</dbReference>
<dbReference type="HPA" id="ENSG00000143862">
    <property type="expression patterns" value="Tissue enhanced (brain)"/>
</dbReference>
<dbReference type="MIM" id="616597">
    <property type="type" value="gene"/>
</dbReference>
<dbReference type="neXtProt" id="NX_Q96BM9"/>
<dbReference type="OpenTargets" id="ENSG00000143862"/>
<dbReference type="PharmGKB" id="PA134905021"/>
<dbReference type="VEuPathDB" id="HostDB:ENSG00000143862"/>
<dbReference type="eggNOG" id="KOG0075">
    <property type="taxonomic scope" value="Eukaryota"/>
</dbReference>
<dbReference type="GeneTree" id="ENSGT00940000159657"/>
<dbReference type="HOGENOM" id="CLU_040729_10_0_1"/>
<dbReference type="InParanoid" id="Q96BM9"/>
<dbReference type="OMA" id="RFRSEWG"/>
<dbReference type="OrthoDB" id="2011769at2759"/>
<dbReference type="PAN-GO" id="Q96BM9">
    <property type="GO annotations" value="2 GO annotations based on evolutionary models"/>
</dbReference>
<dbReference type="PhylomeDB" id="Q96BM9"/>
<dbReference type="TreeFam" id="TF105470"/>
<dbReference type="PathwayCommons" id="Q96BM9"/>
<dbReference type="Reactome" id="R-HSA-6798695">
    <property type="pathway name" value="Neutrophil degranulation"/>
</dbReference>
<dbReference type="SignaLink" id="Q96BM9"/>
<dbReference type="BioGRID-ORCS" id="127829">
    <property type="hits" value="17 hits in 1170 CRISPR screens"/>
</dbReference>
<dbReference type="CD-CODE" id="91857CE7">
    <property type="entry name" value="Nucleolus"/>
</dbReference>
<dbReference type="ChiTaRS" id="ARL8A">
    <property type="organism name" value="human"/>
</dbReference>
<dbReference type="EvolutionaryTrace" id="Q96BM9"/>
<dbReference type="GeneWiki" id="ARL8A"/>
<dbReference type="GenomeRNAi" id="127829"/>
<dbReference type="Pharos" id="Q96BM9">
    <property type="development level" value="Tbio"/>
</dbReference>
<dbReference type="PRO" id="PR:Q96BM9"/>
<dbReference type="Proteomes" id="UP000005640">
    <property type="component" value="Chromosome 1"/>
</dbReference>
<dbReference type="RNAct" id="Q96BM9">
    <property type="molecule type" value="protein"/>
</dbReference>
<dbReference type="Bgee" id="ENSG00000143862">
    <property type="expression patterns" value="Expressed in cortical plate and 171 other cell types or tissues"/>
</dbReference>
<dbReference type="ExpressionAtlas" id="Q96BM9">
    <property type="expression patterns" value="baseline and differential"/>
</dbReference>
<dbReference type="GO" id="GO:1904115">
    <property type="term" value="C:axon cytoplasm"/>
    <property type="evidence" value="ECO:0007669"/>
    <property type="project" value="GOC"/>
</dbReference>
<dbReference type="GO" id="GO:0035577">
    <property type="term" value="C:azurophil granule membrane"/>
    <property type="evidence" value="ECO:0000304"/>
    <property type="project" value="Reactome"/>
</dbReference>
<dbReference type="GO" id="GO:0005737">
    <property type="term" value="C:cytoplasm"/>
    <property type="evidence" value="ECO:0000314"/>
    <property type="project" value="UniProtKB"/>
</dbReference>
<dbReference type="GO" id="GO:0070062">
    <property type="term" value="C:extracellular exosome"/>
    <property type="evidence" value="ECO:0007005"/>
    <property type="project" value="UniProtKB"/>
</dbReference>
<dbReference type="GO" id="GO:0101003">
    <property type="term" value="C:ficolin-1-rich granule membrane"/>
    <property type="evidence" value="ECO:0000304"/>
    <property type="project" value="Reactome"/>
</dbReference>
<dbReference type="GO" id="GO:0031902">
    <property type="term" value="C:late endosome membrane"/>
    <property type="evidence" value="ECO:0007669"/>
    <property type="project" value="UniProtKB-SubCell"/>
</dbReference>
<dbReference type="GO" id="GO:0005765">
    <property type="term" value="C:lysosomal membrane"/>
    <property type="evidence" value="ECO:0007005"/>
    <property type="project" value="UniProtKB"/>
</dbReference>
<dbReference type="GO" id="GO:0016020">
    <property type="term" value="C:membrane"/>
    <property type="evidence" value="ECO:0007005"/>
    <property type="project" value="UniProtKB"/>
</dbReference>
<dbReference type="GO" id="GO:0030496">
    <property type="term" value="C:midbody"/>
    <property type="evidence" value="ECO:0000314"/>
    <property type="project" value="UniProtKB"/>
</dbReference>
<dbReference type="GO" id="GO:0005886">
    <property type="term" value="C:plasma membrane"/>
    <property type="evidence" value="ECO:0000304"/>
    <property type="project" value="Reactome"/>
</dbReference>
<dbReference type="GO" id="GO:0051233">
    <property type="term" value="C:spindle midzone"/>
    <property type="evidence" value="ECO:0000314"/>
    <property type="project" value="UniProtKB"/>
</dbReference>
<dbReference type="GO" id="GO:0045202">
    <property type="term" value="C:synapse"/>
    <property type="evidence" value="ECO:0007669"/>
    <property type="project" value="UniProtKB-SubCell"/>
</dbReference>
<dbReference type="GO" id="GO:0043014">
    <property type="term" value="F:alpha-tubulin binding"/>
    <property type="evidence" value="ECO:0000250"/>
    <property type="project" value="UniProtKB"/>
</dbReference>
<dbReference type="GO" id="GO:0048487">
    <property type="term" value="F:beta-tubulin binding"/>
    <property type="evidence" value="ECO:0000250"/>
    <property type="project" value="UniProtKB"/>
</dbReference>
<dbReference type="GO" id="GO:0005525">
    <property type="term" value="F:GTP binding"/>
    <property type="evidence" value="ECO:0000314"/>
    <property type="project" value="UniProtKB"/>
</dbReference>
<dbReference type="GO" id="GO:0003924">
    <property type="term" value="F:GTPase activity"/>
    <property type="evidence" value="ECO:0000303"/>
    <property type="project" value="UniProtKB"/>
</dbReference>
<dbReference type="GO" id="GO:0008089">
    <property type="term" value="P:anterograde axonal transport"/>
    <property type="evidence" value="ECO:0000318"/>
    <property type="project" value="GO_Central"/>
</dbReference>
<dbReference type="GO" id="GO:0051301">
    <property type="term" value="P:cell division"/>
    <property type="evidence" value="ECO:0007669"/>
    <property type="project" value="UniProtKB-KW"/>
</dbReference>
<dbReference type="GO" id="GO:0007059">
    <property type="term" value="P:chromosome segregation"/>
    <property type="evidence" value="ECO:0000250"/>
    <property type="project" value="UniProtKB"/>
</dbReference>
<dbReference type="GO" id="GO:0015031">
    <property type="term" value="P:protein transport"/>
    <property type="evidence" value="ECO:0007669"/>
    <property type="project" value="UniProtKB-KW"/>
</dbReference>
<dbReference type="CDD" id="cd04159">
    <property type="entry name" value="Arl10_like"/>
    <property type="match status" value="1"/>
</dbReference>
<dbReference type="FunFam" id="3.40.50.300:FF:000247">
    <property type="entry name" value="ADP-ribosylation factor-like GTPase 8A"/>
    <property type="match status" value="1"/>
</dbReference>
<dbReference type="Gene3D" id="3.40.50.300">
    <property type="entry name" value="P-loop containing nucleotide triphosphate hydrolases"/>
    <property type="match status" value="1"/>
</dbReference>
<dbReference type="InterPro" id="IPR044154">
    <property type="entry name" value="Arl8a/8b"/>
</dbReference>
<dbReference type="InterPro" id="IPR027417">
    <property type="entry name" value="P-loop_NTPase"/>
</dbReference>
<dbReference type="InterPro" id="IPR005225">
    <property type="entry name" value="Small_GTP-bd"/>
</dbReference>
<dbReference type="InterPro" id="IPR006689">
    <property type="entry name" value="Small_GTPase_ARF/SAR"/>
</dbReference>
<dbReference type="NCBIfam" id="TIGR00231">
    <property type="entry name" value="small_GTP"/>
    <property type="match status" value="1"/>
</dbReference>
<dbReference type="PANTHER" id="PTHR45732">
    <property type="entry name" value="ADP-RIBOSYLATION FACTOR-LIKE PROTEIN 8"/>
    <property type="match status" value="1"/>
</dbReference>
<dbReference type="PANTHER" id="PTHR45732:SF4">
    <property type="entry name" value="ADP-RIBOSYLATION FACTOR-LIKE PROTEIN 8A"/>
    <property type="match status" value="1"/>
</dbReference>
<dbReference type="Pfam" id="PF00025">
    <property type="entry name" value="Arf"/>
    <property type="match status" value="1"/>
</dbReference>
<dbReference type="PRINTS" id="PR00328">
    <property type="entry name" value="SAR1GTPBP"/>
</dbReference>
<dbReference type="SMART" id="SM00177">
    <property type="entry name" value="ARF"/>
    <property type="match status" value="1"/>
</dbReference>
<dbReference type="SMART" id="SM00175">
    <property type="entry name" value="RAB"/>
    <property type="match status" value="1"/>
</dbReference>
<dbReference type="SMART" id="SM00178">
    <property type="entry name" value="SAR"/>
    <property type="match status" value="1"/>
</dbReference>
<dbReference type="SUPFAM" id="SSF52540">
    <property type="entry name" value="P-loop containing nucleoside triphosphate hydrolases"/>
    <property type="match status" value="1"/>
</dbReference>
<dbReference type="PROSITE" id="PS51417">
    <property type="entry name" value="ARF"/>
    <property type="match status" value="1"/>
</dbReference>
<comment type="function">
    <text evidence="2 3">Plays a role in lysosome motility (By similarity). In neurons, mediates the anterograde axonal long-range transport of presynaptic lysosome-related vesicles required for presynaptic biogenesis and synaptic function (By similarity). May play a role in chromosome segregation (By similarity).</text>
</comment>
<comment type="subunit">
    <text evidence="5 6">Interacts with PLEKHM1 (PubMed:28325809). When GTP-bound, interacts with RUFY3 and RUFY4, but not with RUFY1, nor RUFY2 (PubMed:35314674).</text>
</comment>
<comment type="interaction">
    <interactant intactId="EBI-4401082">
        <id>Q96BM9</id>
    </interactant>
    <interactant intactId="EBI-1220583">
        <id>Q96EN8</id>
        <label>MOCOS</label>
    </interactant>
    <organismsDiffer>false</organismsDiffer>
    <experiments>4</experiments>
</comment>
<comment type="interaction">
    <interactant intactId="EBI-4401082">
        <id>Q96BM9</id>
    </interactant>
    <interactant intactId="EBI-473814">
        <id>Q9Y4G2</id>
        <label>PLEKHM1</label>
    </interactant>
    <organismsDiffer>false</organismsDiffer>
    <experiments>2</experiments>
</comment>
<comment type="interaction">
    <interactant intactId="EBI-4401082">
        <id>Q96BM9</id>
    </interactant>
    <interactant intactId="EBI-1053259">
        <id>Q9UHX1</id>
        <label>PUF60</label>
    </interactant>
    <organismsDiffer>false</organismsDiffer>
    <experiments>3</experiments>
</comment>
<comment type="interaction">
    <interactant intactId="EBI-4401082">
        <id>Q96BM9</id>
    </interactant>
    <interactant intactId="EBI-632715">
        <id>Q13573</id>
        <label>SNW1</label>
    </interactant>
    <organismsDiffer>false</organismsDiffer>
    <experiments>2</experiments>
</comment>
<comment type="interaction">
    <interactant intactId="EBI-4401082">
        <id>Q96BM9</id>
    </interactant>
    <interactant intactId="EBI-742688">
        <id>Q9NZD8</id>
        <label>SPG21</label>
    </interactant>
    <organismsDiffer>false</organismsDiffer>
    <experiments>4</experiments>
</comment>
<comment type="interaction">
    <interactant intactId="EBI-4401082">
        <id>Q96BM9</id>
    </interactant>
    <interactant intactId="EBI-1224427">
        <id>P07919</id>
        <label>UQCRH</label>
    </interactant>
    <organismsDiffer>false</organismsDiffer>
    <experiments>6</experiments>
</comment>
<comment type="interaction">
    <interactant intactId="EBI-4401082">
        <id>Q96BM9</id>
    </interactant>
    <interactant intactId="EBI-11478518">
        <id>PRO_0000041224</id>
        <dbReference type="UniProtKB" id="Q86500"/>
    </interactant>
    <organismsDiffer>true</organismsDiffer>
    <experiments>2</experiments>
</comment>
<comment type="subcellular location">
    <subcellularLocation>
        <location evidence="3">Late endosome membrane</location>
    </subcellularLocation>
    <subcellularLocation>
        <location evidence="2">Lysosome membrane</location>
    </subcellularLocation>
    <subcellularLocation>
        <location evidence="3">Cytoplasm</location>
        <location evidence="3">Cytoskeleton</location>
        <location evidence="3">Spindle</location>
    </subcellularLocation>
    <subcellularLocation>
        <location evidence="2">Cell projection</location>
        <location evidence="2">Axon</location>
    </subcellularLocation>
    <subcellularLocation>
        <location evidence="2">Synapse</location>
    </subcellularLocation>
    <text evidence="3">Localizes with microtubules at the spindle mid-zone during mitosis.</text>
</comment>
<comment type="tissue specificity">
    <text evidence="4">Ubiquitously expressed.</text>
</comment>
<comment type="similarity">
    <text evidence="7">Belongs to the small GTPase superfamily. Arf family.</text>
</comment>
<evidence type="ECO:0000250" key="1"/>
<evidence type="ECO:0000250" key="2">
    <source>
        <dbReference type="UniProtKB" id="Q9CQW2"/>
    </source>
</evidence>
<evidence type="ECO:0000250" key="3">
    <source>
        <dbReference type="UniProtKB" id="Q9NVJ2"/>
    </source>
</evidence>
<evidence type="ECO:0000269" key="4">
    <source>
    </source>
</evidence>
<evidence type="ECO:0000269" key="5">
    <source>
    </source>
</evidence>
<evidence type="ECO:0000269" key="6">
    <source>
    </source>
</evidence>
<evidence type="ECO:0000305" key="7"/>
<evidence type="ECO:0007829" key="8">
    <source>
        <dbReference type="PDB" id="1ZD9"/>
    </source>
</evidence>
<evidence type="ECO:0007829" key="9">
    <source>
        <dbReference type="PDB" id="2H18"/>
    </source>
</evidence>
<feature type="chain" id="PRO_0000232916" description="ADP-ribosylation factor-like protein 8A">
    <location>
        <begin position="1"/>
        <end position="186"/>
    </location>
</feature>
<feature type="intramembrane region" description="Note=Mediates targeting to membranes" evidence="1">
    <location>
        <begin position="1"/>
        <end position="19"/>
    </location>
</feature>
<feature type="binding site">
    <location>
        <begin position="29"/>
        <end position="35"/>
    </location>
    <ligand>
        <name>GTP</name>
        <dbReference type="ChEBI" id="CHEBI:37565"/>
    </ligand>
</feature>
<feature type="binding site" evidence="1">
    <location>
        <begin position="71"/>
        <end position="75"/>
    </location>
    <ligand>
        <name>GTP</name>
        <dbReference type="ChEBI" id="CHEBI:37565"/>
    </ligand>
</feature>
<feature type="binding site">
    <location>
        <begin position="130"/>
        <end position="133"/>
    </location>
    <ligand>
        <name>GTP</name>
        <dbReference type="ChEBI" id="CHEBI:37565"/>
    </ligand>
</feature>
<feature type="helix" evidence="9">
    <location>
        <begin position="9"/>
        <end position="17"/>
    </location>
</feature>
<feature type="strand" evidence="8">
    <location>
        <begin position="19"/>
        <end position="26"/>
    </location>
</feature>
<feature type="helix" evidence="8">
    <location>
        <begin position="33"/>
        <end position="42"/>
    </location>
</feature>
<feature type="strand" evidence="9">
    <location>
        <begin position="46"/>
        <end position="49"/>
    </location>
</feature>
<feature type="strand" evidence="8">
    <location>
        <begin position="54"/>
        <end position="62"/>
    </location>
</feature>
<feature type="strand" evidence="8">
    <location>
        <begin position="65"/>
        <end position="72"/>
    </location>
</feature>
<feature type="helix" evidence="8">
    <location>
        <begin position="76"/>
        <end position="79"/>
    </location>
</feature>
<feature type="helix" evidence="8">
    <location>
        <begin position="82"/>
        <end position="86"/>
    </location>
</feature>
<feature type="strand" evidence="8">
    <location>
        <begin position="90"/>
        <end position="97"/>
    </location>
</feature>
<feature type="helix" evidence="8">
    <location>
        <begin position="101"/>
        <end position="103"/>
    </location>
</feature>
<feature type="helix" evidence="8">
    <location>
        <begin position="104"/>
        <end position="115"/>
    </location>
</feature>
<feature type="helix" evidence="8">
    <location>
        <begin position="118"/>
        <end position="120"/>
    </location>
</feature>
<feature type="strand" evidence="8">
    <location>
        <begin position="125"/>
        <end position="130"/>
    </location>
</feature>
<feature type="helix" evidence="8">
    <location>
        <begin position="140"/>
        <end position="146"/>
    </location>
</feature>
<feature type="helix" evidence="8">
    <location>
        <begin position="149"/>
        <end position="151"/>
    </location>
</feature>
<feature type="strand" evidence="8">
    <location>
        <begin position="157"/>
        <end position="161"/>
    </location>
</feature>
<feature type="turn" evidence="8">
    <location>
        <begin position="164"/>
        <end position="166"/>
    </location>
</feature>
<feature type="helix" evidence="8">
    <location>
        <begin position="170"/>
        <end position="179"/>
    </location>
</feature>